<accession>O30245</accession>
<name>RIO2_ARCFU</name>
<reference key="1">
    <citation type="journal article" date="1997" name="Nature">
        <title>The complete genome sequence of the hyperthermophilic, sulphate-reducing archaeon Archaeoglobus fulgidus.</title>
        <authorList>
            <person name="Klenk H.-P."/>
            <person name="Clayton R.A."/>
            <person name="Tomb J.-F."/>
            <person name="White O."/>
            <person name="Nelson K.E."/>
            <person name="Ketchum K.A."/>
            <person name="Dodson R.J."/>
            <person name="Gwinn M.L."/>
            <person name="Hickey E.K."/>
            <person name="Peterson J.D."/>
            <person name="Richardson D.L."/>
            <person name="Kerlavage A.R."/>
            <person name="Graham D.E."/>
            <person name="Kyrpides N.C."/>
            <person name="Fleischmann R.D."/>
            <person name="Quackenbush J."/>
            <person name="Lee N.H."/>
            <person name="Sutton G.G."/>
            <person name="Gill S.R."/>
            <person name="Kirkness E.F."/>
            <person name="Dougherty B.A."/>
            <person name="McKenney K."/>
            <person name="Adams M.D."/>
            <person name="Loftus B.J."/>
            <person name="Peterson S.N."/>
            <person name="Reich C.I."/>
            <person name="McNeil L.K."/>
            <person name="Badger J.H."/>
            <person name="Glodek A."/>
            <person name="Zhou L."/>
            <person name="Overbeek R."/>
            <person name="Gocayne J.D."/>
            <person name="Weidman J.F."/>
            <person name="McDonald L.A."/>
            <person name="Utterback T.R."/>
            <person name="Cotton M.D."/>
            <person name="Spriggs T."/>
            <person name="Artiach P."/>
            <person name="Kaine B.P."/>
            <person name="Sykes S.M."/>
            <person name="Sadow P.W."/>
            <person name="D'Andrea K.P."/>
            <person name="Bowman C."/>
            <person name="Fujii C."/>
            <person name="Garland S.A."/>
            <person name="Mason T.M."/>
            <person name="Olsen G.J."/>
            <person name="Fraser C.M."/>
            <person name="Smith H.O."/>
            <person name="Woese C.R."/>
            <person name="Venter J.C."/>
        </authorList>
    </citation>
    <scope>NUCLEOTIDE SEQUENCE [LARGE SCALE GENOMIC DNA]</scope>
    <source>
        <strain>ATCC 49558 / DSM 4304 / JCM 9628 / NBRC 100126 / VC-16</strain>
    </source>
</reference>
<reference key="2">
    <citation type="journal article" date="2004" name="Structure">
        <title>Crystal structure of A. fulgidus Rio2 defines a new family of serine protein kinases.</title>
        <authorList>
            <person name="LaRonde-LeBlanc N."/>
            <person name="Wlodawer A."/>
        </authorList>
    </citation>
    <scope>X-RAY CRYSTALLOGRAPHY (1.99 ANGSTROMS) OF APOPROTEIN AND IN COMPLEXES WITH ATP AND ATP ANALOG</scope>
    <scope>FUNCTION</scope>
    <scope>IDENTIFICATION BY MASS SPECTROMETRY</scope>
    <scope>SUBUNIT</scope>
    <source>
        <strain>ATCC 49558 / DSM 4304 / JCM 9628 / NBRC 100126 / VC-16</strain>
    </source>
</reference>
<reference key="3">
    <citation type="journal article" date="2005" name="FEBS J.">
        <title>Autophosphorylation of Archaeoglobus fulgidus Rio2 and crystal structures of its nucleotide-metal ion complexes.</title>
        <authorList>
            <person name="LaRonde-LeBlanc N."/>
            <person name="Guszczynski T."/>
            <person name="Copeland T."/>
            <person name="Wlodawer A."/>
        </authorList>
    </citation>
    <scope>X-RAY CRYSTALLOGRAPHY (1.75 ANGSTROMS) IN COMPLEXES WITH MN-ATP AND MN-ADP</scope>
    <scope>PHOSPHORYLATION AT SER-128</scope>
    <source>
        <strain>ATCC 49558 / DSM 4304 / JCM 9628 / NBRC 100126 / VC-16</strain>
    </source>
</reference>
<keyword id="KW-0002">3D-structure</keyword>
<keyword id="KW-0067">ATP-binding</keyword>
<keyword id="KW-0418">Kinase</keyword>
<keyword id="KW-0460">Magnesium</keyword>
<keyword id="KW-0479">Metal-binding</keyword>
<keyword id="KW-0547">Nucleotide-binding</keyword>
<keyword id="KW-0597">Phosphoprotein</keyword>
<keyword id="KW-1185">Reference proteome</keyword>
<keyword id="KW-0723">Serine/threonine-protein kinase</keyword>
<keyword id="KW-0808">Transferase</keyword>
<gene>
    <name type="primary">rio2</name>
    <name type="ordered locus">AF_2426</name>
</gene>
<proteinExistence type="evidence at protein level"/>
<evidence type="ECO:0000255" key="1">
    <source>
        <dbReference type="PROSITE-ProRule" id="PRU00159"/>
    </source>
</evidence>
<evidence type="ECO:0000269" key="2">
    <source>
    </source>
</evidence>
<evidence type="ECO:0000269" key="3">
    <source>
    </source>
</evidence>
<evidence type="ECO:0000305" key="4"/>
<evidence type="ECO:0000305" key="5">
    <source>
    </source>
</evidence>
<evidence type="ECO:0000305" key="6">
    <source>
    </source>
</evidence>
<evidence type="ECO:0007744" key="7">
    <source>
        <dbReference type="PDB" id="1TQP"/>
    </source>
</evidence>
<evidence type="ECO:0007744" key="8">
    <source>
        <dbReference type="PDB" id="1ZAO"/>
    </source>
</evidence>
<evidence type="ECO:0007744" key="9">
    <source>
        <dbReference type="PDB" id="1ZAR"/>
    </source>
</evidence>
<evidence type="ECO:0007829" key="10">
    <source>
        <dbReference type="PDB" id="1ZAR"/>
    </source>
</evidence>
<organism>
    <name type="scientific">Archaeoglobus fulgidus (strain ATCC 49558 / DSM 4304 / JCM 9628 / NBRC 100126 / VC-16)</name>
    <dbReference type="NCBI Taxonomy" id="224325"/>
    <lineage>
        <taxon>Archaea</taxon>
        <taxon>Methanobacteriati</taxon>
        <taxon>Methanobacteriota</taxon>
        <taxon>Archaeoglobi</taxon>
        <taxon>Archaeoglobales</taxon>
        <taxon>Archaeoglobaceae</taxon>
        <taxon>Archaeoglobus</taxon>
    </lineage>
</organism>
<protein>
    <recommendedName>
        <fullName>RIO-type serine/threonine-protein kinase Rio2</fullName>
        <shortName>AfRio2</shortName>
        <ecNumber>2.7.11.1</ecNumber>
    </recommendedName>
</protein>
<dbReference type="EC" id="2.7.11.1"/>
<dbReference type="EMBL" id="AE000782">
    <property type="protein sequence ID" value="AAB91236.1"/>
    <property type="molecule type" value="Genomic_DNA"/>
</dbReference>
<dbReference type="PIR" id="C69553">
    <property type="entry name" value="C69553"/>
</dbReference>
<dbReference type="RefSeq" id="WP_010879913.1">
    <property type="nucleotide sequence ID" value="NC_000917.1"/>
</dbReference>
<dbReference type="PDB" id="1TQI">
    <property type="method" value="X-ray"/>
    <property type="resolution" value="2.00 A"/>
    <property type="chains" value="A=1-282"/>
</dbReference>
<dbReference type="PDB" id="1TQM">
    <property type="method" value="X-ray"/>
    <property type="resolution" value="1.99 A"/>
    <property type="chains" value="A=1-282"/>
</dbReference>
<dbReference type="PDB" id="1TQP">
    <property type="method" value="X-ray"/>
    <property type="resolution" value="2.10 A"/>
    <property type="chains" value="A=1-282"/>
</dbReference>
<dbReference type="PDB" id="1ZAO">
    <property type="method" value="X-ray"/>
    <property type="resolution" value="1.84 A"/>
    <property type="chains" value="A=1-282"/>
</dbReference>
<dbReference type="PDB" id="1ZAR">
    <property type="method" value="X-ray"/>
    <property type="resolution" value="1.75 A"/>
    <property type="chains" value="A=1-282"/>
</dbReference>
<dbReference type="PDBsum" id="1TQI"/>
<dbReference type="PDBsum" id="1TQM"/>
<dbReference type="PDBsum" id="1TQP"/>
<dbReference type="PDBsum" id="1ZAO"/>
<dbReference type="PDBsum" id="1ZAR"/>
<dbReference type="SMR" id="O30245"/>
<dbReference type="STRING" id="224325.AF_2426"/>
<dbReference type="iPTMnet" id="O30245"/>
<dbReference type="PaxDb" id="224325-AF_2426"/>
<dbReference type="EnsemblBacteria" id="AAB91236">
    <property type="protein sequence ID" value="AAB91236"/>
    <property type="gene ID" value="AF_2426"/>
</dbReference>
<dbReference type="GeneID" id="24796150"/>
<dbReference type="KEGG" id="afu:AF_2426"/>
<dbReference type="eggNOG" id="arCOG01181">
    <property type="taxonomic scope" value="Archaea"/>
</dbReference>
<dbReference type="HOGENOM" id="CLU_018693_1_0_2"/>
<dbReference type="OrthoDB" id="50101at2157"/>
<dbReference type="PhylomeDB" id="O30245"/>
<dbReference type="BRENDA" id="2.7.11.1">
    <property type="organism ID" value="414"/>
</dbReference>
<dbReference type="EvolutionaryTrace" id="O30245"/>
<dbReference type="Proteomes" id="UP000002199">
    <property type="component" value="Chromosome"/>
</dbReference>
<dbReference type="GO" id="GO:0005829">
    <property type="term" value="C:cytosol"/>
    <property type="evidence" value="ECO:0007669"/>
    <property type="project" value="TreeGrafter"/>
</dbReference>
<dbReference type="GO" id="GO:0030688">
    <property type="term" value="C:preribosome, small subunit precursor"/>
    <property type="evidence" value="ECO:0007669"/>
    <property type="project" value="TreeGrafter"/>
</dbReference>
<dbReference type="GO" id="GO:0005524">
    <property type="term" value="F:ATP binding"/>
    <property type="evidence" value="ECO:0007669"/>
    <property type="project" value="UniProtKB-KW"/>
</dbReference>
<dbReference type="GO" id="GO:0046872">
    <property type="term" value="F:metal ion binding"/>
    <property type="evidence" value="ECO:0007669"/>
    <property type="project" value="UniProtKB-KW"/>
</dbReference>
<dbReference type="GO" id="GO:0106310">
    <property type="term" value="F:protein serine kinase activity"/>
    <property type="evidence" value="ECO:0007669"/>
    <property type="project" value="RHEA"/>
</dbReference>
<dbReference type="GO" id="GO:0004674">
    <property type="term" value="F:protein serine/threonine kinase activity"/>
    <property type="evidence" value="ECO:0007669"/>
    <property type="project" value="UniProtKB-KW"/>
</dbReference>
<dbReference type="GO" id="GO:0030490">
    <property type="term" value="P:maturation of SSU-rRNA"/>
    <property type="evidence" value="ECO:0007669"/>
    <property type="project" value="TreeGrafter"/>
</dbReference>
<dbReference type="CDD" id="cd05119">
    <property type="entry name" value="RIO"/>
    <property type="match status" value="1"/>
</dbReference>
<dbReference type="Gene3D" id="3.30.200.20">
    <property type="entry name" value="Phosphorylase Kinase, domain 1"/>
    <property type="match status" value="1"/>
</dbReference>
<dbReference type="Gene3D" id="1.10.510.10">
    <property type="entry name" value="Transferase(Phosphotransferase) domain 1"/>
    <property type="match status" value="1"/>
</dbReference>
<dbReference type="Gene3D" id="1.10.10.10">
    <property type="entry name" value="Winged helix-like DNA-binding domain superfamily/Winged helix DNA-binding domain"/>
    <property type="match status" value="1"/>
</dbReference>
<dbReference type="InterPro" id="IPR011009">
    <property type="entry name" value="Kinase-like_dom_sf"/>
</dbReference>
<dbReference type="InterPro" id="IPR015285">
    <property type="entry name" value="RIO2_wHTH_N"/>
</dbReference>
<dbReference type="InterPro" id="IPR018934">
    <property type="entry name" value="RIO_dom"/>
</dbReference>
<dbReference type="InterPro" id="IPR000687">
    <property type="entry name" value="RIO_kinase"/>
</dbReference>
<dbReference type="InterPro" id="IPR008266">
    <property type="entry name" value="Tyr_kinase_AS"/>
</dbReference>
<dbReference type="InterPro" id="IPR036388">
    <property type="entry name" value="WH-like_DNA-bd_sf"/>
</dbReference>
<dbReference type="InterPro" id="IPR036390">
    <property type="entry name" value="WH_DNA-bd_sf"/>
</dbReference>
<dbReference type="PANTHER" id="PTHR45852">
    <property type="entry name" value="SER/THR-PROTEIN KINASE RIO2"/>
    <property type="match status" value="1"/>
</dbReference>
<dbReference type="PANTHER" id="PTHR45852:SF1">
    <property type="entry name" value="SERINE_THREONINE-PROTEIN KINASE RIO2"/>
    <property type="match status" value="1"/>
</dbReference>
<dbReference type="Pfam" id="PF01163">
    <property type="entry name" value="RIO1"/>
    <property type="match status" value="1"/>
</dbReference>
<dbReference type="Pfam" id="PF09202">
    <property type="entry name" value="Rio2_N"/>
    <property type="match status" value="1"/>
</dbReference>
<dbReference type="SMART" id="SM00090">
    <property type="entry name" value="RIO"/>
    <property type="match status" value="1"/>
</dbReference>
<dbReference type="SUPFAM" id="SSF56112">
    <property type="entry name" value="Protein kinase-like (PK-like)"/>
    <property type="match status" value="1"/>
</dbReference>
<dbReference type="SUPFAM" id="SSF46785">
    <property type="entry name" value="Winged helix' DNA-binding domain"/>
    <property type="match status" value="1"/>
</dbReference>
<comment type="catalytic activity">
    <reaction>
        <text>L-seryl-[protein] + ATP = O-phospho-L-seryl-[protein] + ADP + H(+)</text>
        <dbReference type="Rhea" id="RHEA:17989"/>
        <dbReference type="Rhea" id="RHEA-COMP:9863"/>
        <dbReference type="Rhea" id="RHEA-COMP:11604"/>
        <dbReference type="ChEBI" id="CHEBI:15378"/>
        <dbReference type="ChEBI" id="CHEBI:29999"/>
        <dbReference type="ChEBI" id="CHEBI:30616"/>
        <dbReference type="ChEBI" id="CHEBI:83421"/>
        <dbReference type="ChEBI" id="CHEBI:456216"/>
        <dbReference type="EC" id="2.7.11.1"/>
    </reaction>
</comment>
<comment type="catalytic activity">
    <reaction>
        <text>L-threonyl-[protein] + ATP = O-phospho-L-threonyl-[protein] + ADP + H(+)</text>
        <dbReference type="Rhea" id="RHEA:46608"/>
        <dbReference type="Rhea" id="RHEA-COMP:11060"/>
        <dbReference type="Rhea" id="RHEA-COMP:11605"/>
        <dbReference type="ChEBI" id="CHEBI:15378"/>
        <dbReference type="ChEBI" id="CHEBI:30013"/>
        <dbReference type="ChEBI" id="CHEBI:30616"/>
        <dbReference type="ChEBI" id="CHEBI:61977"/>
        <dbReference type="ChEBI" id="CHEBI:456216"/>
        <dbReference type="EC" id="2.7.11.1"/>
    </reaction>
</comment>
<comment type="cofactor">
    <cofactor>
        <name>Mg(2+)</name>
        <dbReference type="ChEBI" id="CHEBI:18420"/>
    </cofactor>
    <cofactor>
        <name>Mn(2+)</name>
        <dbReference type="ChEBI" id="CHEBI:29035"/>
    </cofactor>
    <text>Mg(2+). Mn(2+) is seen in the crystal structure; there are 2 Mn(2+) ions in the ATP-bound crystal and 1 Mn(2+) in the ADP-bound crystal.</text>
</comment>
<comment type="subunit">
    <text evidence="2">Monomer.</text>
</comment>
<comment type="PTM">
    <text evidence="3">Autophosphorylated.</text>
</comment>
<comment type="similarity">
    <text evidence="4">Belongs to the protein kinase superfamily. RIO-type Ser/Thr kinase family.</text>
</comment>
<feature type="chain" id="PRO_0000347334" description="RIO-type serine/threonine-protein kinase Rio2">
    <location>
        <begin position="1"/>
        <end position="282"/>
    </location>
</feature>
<feature type="domain" description="Protein kinase" evidence="1">
    <location>
        <begin position="92"/>
        <end position="282"/>
    </location>
</feature>
<feature type="active site" description="Proton acceptor" evidence="1">
    <location>
        <position position="218"/>
    </location>
</feature>
<feature type="binding site" evidence="1">
    <location>
        <begin position="98"/>
        <end position="106"/>
    </location>
    <ligand>
        <name>ATP</name>
        <dbReference type="ChEBI" id="CHEBI:30616"/>
    </ligand>
</feature>
<feature type="binding site" evidence="6">
    <location>
        <position position="103"/>
    </location>
    <ligand>
        <name>Mg(2+)</name>
        <dbReference type="ChEBI" id="CHEBI:18420"/>
        <label>1</label>
    </ligand>
</feature>
<feature type="binding site" evidence="5">
    <location>
        <position position="120"/>
    </location>
    <ligand>
        <name>ATP</name>
        <dbReference type="ChEBI" id="CHEBI:30616"/>
    </ligand>
</feature>
<feature type="binding site" evidence="3 8">
    <location>
        <position position="126"/>
    </location>
    <ligand>
        <name>ATP</name>
        <dbReference type="ChEBI" id="CHEBI:30616"/>
    </ligand>
</feature>
<feature type="binding site" evidence="2 3 7 8">
    <location>
        <begin position="180"/>
        <end position="186"/>
    </location>
    <ligand>
        <name>ATP</name>
        <dbReference type="ChEBI" id="CHEBI:30616"/>
    </ligand>
</feature>
<feature type="binding site" evidence="2 7">
    <location>
        <position position="222"/>
    </location>
    <ligand>
        <name>ATP</name>
        <dbReference type="ChEBI" id="CHEBI:30616"/>
    </ligand>
</feature>
<feature type="binding site" evidence="3 9">
    <location>
        <position position="223"/>
    </location>
    <ligand>
        <name>ATP</name>
        <dbReference type="ChEBI" id="CHEBI:30616"/>
    </ligand>
</feature>
<feature type="binding site" evidence="6">
    <location>
        <position position="223"/>
    </location>
    <ligand>
        <name>Mg(2+)</name>
        <dbReference type="ChEBI" id="CHEBI:18420"/>
        <label>2</label>
    </ligand>
</feature>
<feature type="binding site" evidence="2 3 7 8">
    <location>
        <position position="235"/>
    </location>
    <ligand>
        <name>ATP</name>
        <dbReference type="ChEBI" id="CHEBI:30616"/>
    </ligand>
</feature>
<feature type="binding site" evidence="6">
    <location>
        <position position="235"/>
    </location>
    <ligand>
        <name>Mg(2+)</name>
        <dbReference type="ChEBI" id="CHEBI:18420"/>
        <label>1</label>
    </ligand>
</feature>
<feature type="binding site" evidence="6">
    <location>
        <position position="235"/>
    </location>
    <ligand>
        <name>Mg(2+)</name>
        <dbReference type="ChEBI" id="CHEBI:18420"/>
        <label>2</label>
    </ligand>
</feature>
<feature type="modified residue" description="Phosphoserine; by autocatalysis" evidence="3">
    <location>
        <position position="128"/>
    </location>
</feature>
<feature type="helix" evidence="10">
    <location>
        <begin position="3"/>
        <end position="8"/>
    </location>
</feature>
<feature type="helix" evidence="10">
    <location>
        <begin position="12"/>
        <end position="22"/>
    </location>
</feature>
<feature type="turn" evidence="10">
    <location>
        <begin position="23"/>
        <end position="27"/>
    </location>
</feature>
<feature type="strand" evidence="10">
    <location>
        <begin position="29"/>
        <end position="32"/>
    </location>
</feature>
<feature type="helix" evidence="10">
    <location>
        <begin position="33"/>
        <end position="40"/>
    </location>
</feature>
<feature type="helix" evidence="10">
    <location>
        <begin position="44"/>
        <end position="56"/>
    </location>
</feature>
<feature type="strand" evidence="10">
    <location>
        <begin position="59"/>
        <end position="63"/>
    </location>
</feature>
<feature type="strand" evidence="10">
    <location>
        <begin position="65"/>
        <end position="67"/>
    </location>
</feature>
<feature type="strand" evidence="10">
    <location>
        <begin position="69"/>
        <end position="72"/>
    </location>
</feature>
<feature type="helix" evidence="10">
    <location>
        <begin position="74"/>
        <end position="87"/>
    </location>
</feature>
<feature type="strand" evidence="10">
    <location>
        <begin position="92"/>
        <end position="100"/>
    </location>
</feature>
<feature type="strand" evidence="10">
    <location>
        <begin position="102"/>
        <end position="111"/>
    </location>
</feature>
<feature type="turn" evidence="10">
    <location>
        <begin position="112"/>
        <end position="114"/>
    </location>
</feature>
<feature type="strand" evidence="10">
    <location>
        <begin position="115"/>
        <end position="122"/>
    </location>
</feature>
<feature type="helix" evidence="10">
    <location>
        <begin position="143"/>
        <end position="160"/>
    </location>
</feature>
<feature type="turn" evidence="10">
    <location>
        <begin position="161"/>
        <end position="163"/>
    </location>
</feature>
<feature type="strand" evidence="10">
    <location>
        <begin position="164"/>
        <end position="166"/>
    </location>
</feature>
<feature type="strand" evidence="10">
    <location>
        <begin position="169"/>
        <end position="173"/>
    </location>
</feature>
<feature type="strand" evidence="10">
    <location>
        <begin position="176"/>
        <end position="180"/>
    </location>
</feature>
<feature type="helix" evidence="10">
    <location>
        <begin position="187"/>
        <end position="189"/>
    </location>
</feature>
<feature type="helix" evidence="10">
    <location>
        <begin position="195"/>
        <end position="211"/>
    </location>
</feature>
<feature type="strand" evidence="10">
    <location>
        <begin position="223"/>
        <end position="227"/>
    </location>
</feature>
<feature type="strand" evidence="10">
    <location>
        <begin position="230"/>
        <end position="233"/>
    </location>
</feature>
<feature type="helix" evidence="10">
    <location>
        <begin position="247"/>
        <end position="266"/>
    </location>
</feature>
<feature type="helix" evidence="10">
    <location>
        <begin position="272"/>
        <end position="280"/>
    </location>
</feature>
<sequence length="282" mass="32809">MNIAELYGKMGKHSWRIMDAIFKNLWDYEYVPLQLISSHARIGEEKARNILKYLSDLRVVQNRQKDYEGSTFTFIGLSLYSLHRLVRSGKVDAIGKLMGEGKESAVFNCYSEKFGECVVKFHKVGHTSFKKVKEKRDYGDLHFSVLAIRSARNEFRALQKLQGLAVPKVYAWEGNAVLMELIDAKELYRVRVENPDEVLDMILEEVAKFYHRGIVHGDLSQYNVLVSEEGIWIIDFPQSVEVGEEGWREILERDVRNIITYFSRTYRTEKDINSAIDRILQE</sequence>